<sequence>MAREPEEEETVRPAAVVRRCPRCPGWPGAPRPPLWLLCLVACWILGAVADADFSILDEAQVLASQMRRLAAEELGVVTMQRIFNSLVYTEKISNGESEVQQLAKKIREKFNRYLDVVNRNKQVVEASYTAHLTSPLTAIQDCCTIPPSMMEFDGNFNTNVSRTVSCDRLSTTVNSRAFNPGRDLNSVLADNLKSNPGIKWQYFSSEEGIFTVFPAHKFRCKGSYEHRSRPIYVSTVRPQSKHIVVILDHGASVTDTQLQIAKDAAQVILSAIDEHDKISVLTVADAVRTCSLDQCYKTYLSPATSETKRKMSTFVSSVKPSDSPTQHAVGFHRAFQLIRSTSNSTRFQANTDMVIIYLSAGITSKDSSEEDKKATLRVINEENGFLNNSVMILTYALMNDGVTGLKELAFLRDLAEQNSGKYGIPDRTALPVIKGSMMVLNQLSNLETTVGRFYTNLPNRMIDEAVFSLPFSDEMGDGLIMTVSKPCYFGNLLLGIVGVDVNLAYILEDVTYYQDSLASYTFLIDDKGYTLMHPSLTRPYLLSEPPLHTDIIHYENIPKFELVRQNILSLPLGSQIITVPVNSSLSWHINKLRETGKEAYNVSYAWKMVQDTSFILCIVVIQPEIPVKQLKNLNTVPSSKLLYHRLDLLGQPSACLHFKQLATLESPTVMLSAGSFSSPYEHLSQPETKRMVEHYTAYLSDNTRLIANPGLKFSVRNEVMATSHVTDEWMTQMEMSSLNTYIVRRYIATPNGVLRIYPGSLMDKAFDPTRRQWYLHAVANPGLISLTGPYLDVGGAGYVVTISHTIHSSSTQLSSGHTVAVMGIDFTLRYFYKVLMDLLPVCNQDGGNKIRCFIMEDRGYLVAHPTLVDPKGHAPLEQQHITHKEPLVANDILNHPNFVKKNLCNSFSDRTVQRSYKFNTSLVGDLTNLVHGSHCSKYRLTRIPGTNAFVGIVNETCDSLAFCACSMVDRLCLNCHRMEQNECECPCECPLEVNECTGNLTNAENRNPSCEVHQEPVTYTAIDPGLQDALQQCVNSRCNQRMESGDCFGVLDCEWCVVDSDGKTHLDKSYCAPQKECFGGIVGAKSPYVDDMGAIGDEVITLNMIKSAPVGPVAGGIMGCIMVLVLAVYAYRHQIHRRSHQHMSPLAAQEMSVRMSNLENDRDERDDDSHEDRGIISNTRFIAAVMERHVHSPERRRRYWGRSGTESDHGYSTMSPQEDSENPPCNNDPLSAGVDVGNHDDDLDLDTPPQTAALLSHKFHHYRPHHPTLHHSHHLQAAVTVHTVDAEC</sequence>
<accession>Q6PDJ1</accession>
<accession>A2A8W3</accession>
<accession>Q6PFZ0</accession>
<accession>Q6ZPM4</accession>
<accession>Q8BNP3</accession>
<protein>
    <recommendedName>
        <fullName>VWFA and cache domain-containing protein 1</fullName>
        <shortName>Cache domain-containing protein 1</shortName>
    </recommendedName>
</protein>
<proteinExistence type="evidence at protein level"/>
<name>CAHD1_MOUSE</name>
<gene>
    <name type="primary">Cachd1</name>
    <name type="synonym">Kiaa1573</name>
    <name type="synonym">Vwcd1</name>
</gene>
<comment type="function">
    <text evidence="1">May regulate voltage-dependent calcium channels.</text>
</comment>
<comment type="subcellular location">
    <subcellularLocation>
        <location evidence="6">Membrane</location>
        <topology evidence="6">Single-pass type I membrane protein</topology>
    </subcellularLocation>
</comment>
<comment type="alternative products">
    <event type="alternative splicing"/>
    <isoform>
        <id>Q6PDJ1-1</id>
        <name>1</name>
        <sequence type="displayed"/>
    </isoform>
    <isoform>
        <id>Q6PDJ1-2</id>
        <name>2</name>
        <sequence type="described" ref="VSP_028073"/>
    </isoform>
</comment>
<comment type="similarity">
    <text evidence="6">Belongs to the calcium channel subunit alpha-2/delta family.</text>
</comment>
<comment type="sequence caution" evidence="6">
    <conflict type="erroneous gene model prediction">
        <sequence resource="EMBL-CDS" id="CAM20140"/>
    </conflict>
</comment>
<comment type="sequence caution" evidence="6">
    <conflict type="erroneous gene model prediction">
        <sequence resource="EMBL-CDS" id="CAM22543"/>
    </conflict>
</comment>
<evidence type="ECO:0000250" key="1"/>
<evidence type="ECO:0000255" key="2"/>
<evidence type="ECO:0000255" key="3">
    <source>
        <dbReference type="PROSITE-ProRule" id="PRU00219"/>
    </source>
</evidence>
<evidence type="ECO:0000256" key="4">
    <source>
        <dbReference type="SAM" id="MobiDB-lite"/>
    </source>
</evidence>
<evidence type="ECO:0000303" key="5">
    <source>
    </source>
</evidence>
<evidence type="ECO:0000305" key="6"/>
<feature type="signal peptide" evidence="2">
    <location>
        <begin position="1"/>
        <end position="49"/>
    </location>
</feature>
<feature type="chain" id="PRO_0000304662" description="VWFA and cache domain-containing protein 1">
    <location>
        <begin position="50"/>
        <end position="1288"/>
    </location>
</feature>
<feature type="topological domain" description="Extracellular" evidence="2">
    <location>
        <begin position="50"/>
        <end position="1109"/>
    </location>
</feature>
<feature type="transmembrane region" description="Helical" evidence="2">
    <location>
        <begin position="1110"/>
        <end position="1130"/>
    </location>
</feature>
<feature type="topological domain" description="Cytoplasmic" evidence="2">
    <location>
        <begin position="1131"/>
        <end position="1288"/>
    </location>
</feature>
<feature type="domain" description="VWFA" evidence="3">
    <location>
        <begin position="242"/>
        <end position="457"/>
    </location>
</feature>
<feature type="domain" description="Cache 1">
    <location>
        <begin position="467"/>
        <end position="546"/>
    </location>
</feature>
<feature type="domain" description="Cache 2">
    <location>
        <begin position="786"/>
        <end position="867"/>
    </location>
</feature>
<feature type="region of interest" description="Disordered" evidence="4">
    <location>
        <begin position="1157"/>
        <end position="1176"/>
    </location>
</feature>
<feature type="region of interest" description="Disordered" evidence="4">
    <location>
        <begin position="1187"/>
        <end position="1237"/>
    </location>
</feature>
<feature type="compositionally biased region" description="Basic and acidic residues" evidence="4">
    <location>
        <begin position="1159"/>
        <end position="1174"/>
    </location>
</feature>
<feature type="compositionally biased region" description="Polar residues" evidence="4">
    <location>
        <begin position="1210"/>
        <end position="1229"/>
    </location>
</feature>
<feature type="glycosylation site" description="N-linked (GlcNAc...) asparagine" evidence="2">
    <location>
        <position position="159"/>
    </location>
</feature>
<feature type="splice variant" id="VSP_028073" description="In isoform 2." evidence="5">
    <location>
        <begin position="823"/>
        <end position="828"/>
    </location>
</feature>
<organism>
    <name type="scientific">Mus musculus</name>
    <name type="common">Mouse</name>
    <dbReference type="NCBI Taxonomy" id="10090"/>
    <lineage>
        <taxon>Eukaryota</taxon>
        <taxon>Metazoa</taxon>
        <taxon>Chordata</taxon>
        <taxon>Craniata</taxon>
        <taxon>Vertebrata</taxon>
        <taxon>Euteleostomi</taxon>
        <taxon>Mammalia</taxon>
        <taxon>Eutheria</taxon>
        <taxon>Euarchontoglires</taxon>
        <taxon>Glires</taxon>
        <taxon>Rodentia</taxon>
        <taxon>Myomorpha</taxon>
        <taxon>Muroidea</taxon>
        <taxon>Muridae</taxon>
        <taxon>Murinae</taxon>
        <taxon>Mus</taxon>
        <taxon>Mus</taxon>
    </lineage>
</organism>
<reference key="1">
    <citation type="journal article" date="2009" name="PLoS Biol.">
        <title>Lineage-specific biology revealed by a finished genome assembly of the mouse.</title>
        <authorList>
            <person name="Church D.M."/>
            <person name="Goodstadt L."/>
            <person name="Hillier L.W."/>
            <person name="Zody M.C."/>
            <person name="Goldstein S."/>
            <person name="She X."/>
            <person name="Bult C.J."/>
            <person name="Agarwala R."/>
            <person name="Cherry J.L."/>
            <person name="DiCuccio M."/>
            <person name="Hlavina W."/>
            <person name="Kapustin Y."/>
            <person name="Meric P."/>
            <person name="Maglott D."/>
            <person name="Birtle Z."/>
            <person name="Marques A.C."/>
            <person name="Graves T."/>
            <person name="Zhou S."/>
            <person name="Teague B."/>
            <person name="Potamousis K."/>
            <person name="Churas C."/>
            <person name="Place M."/>
            <person name="Herschleb J."/>
            <person name="Runnheim R."/>
            <person name="Forrest D."/>
            <person name="Amos-Landgraf J."/>
            <person name="Schwartz D.C."/>
            <person name="Cheng Z."/>
            <person name="Lindblad-Toh K."/>
            <person name="Eichler E.E."/>
            <person name="Ponting C.P."/>
        </authorList>
    </citation>
    <scope>NUCLEOTIDE SEQUENCE [LARGE SCALE GENOMIC DNA]</scope>
    <source>
        <strain>C57BL/6J</strain>
    </source>
</reference>
<reference key="2">
    <citation type="journal article" date="2004" name="Genome Res.">
        <title>The status, quality, and expansion of the NIH full-length cDNA project: the Mammalian Gene Collection (MGC).</title>
        <authorList>
            <consortium name="The MGC Project Team"/>
        </authorList>
    </citation>
    <scope>NUCLEOTIDE SEQUENCE [LARGE SCALE MRNA]</scope>
    <source>
        <strain>C57BL/6J</strain>
        <tissue>Brain</tissue>
    </source>
</reference>
<reference key="3">
    <citation type="journal article" date="2005" name="Science">
        <title>The transcriptional landscape of the mammalian genome.</title>
        <authorList>
            <person name="Carninci P."/>
            <person name="Kasukawa T."/>
            <person name="Katayama S."/>
            <person name="Gough J."/>
            <person name="Frith M.C."/>
            <person name="Maeda N."/>
            <person name="Oyama R."/>
            <person name="Ravasi T."/>
            <person name="Lenhard B."/>
            <person name="Wells C."/>
            <person name="Kodzius R."/>
            <person name="Shimokawa K."/>
            <person name="Bajic V.B."/>
            <person name="Brenner S.E."/>
            <person name="Batalov S."/>
            <person name="Forrest A.R."/>
            <person name="Zavolan M."/>
            <person name="Davis M.J."/>
            <person name="Wilming L.G."/>
            <person name="Aidinis V."/>
            <person name="Allen J.E."/>
            <person name="Ambesi-Impiombato A."/>
            <person name="Apweiler R."/>
            <person name="Aturaliya R.N."/>
            <person name="Bailey T.L."/>
            <person name="Bansal M."/>
            <person name="Baxter L."/>
            <person name="Beisel K.W."/>
            <person name="Bersano T."/>
            <person name="Bono H."/>
            <person name="Chalk A.M."/>
            <person name="Chiu K.P."/>
            <person name="Choudhary V."/>
            <person name="Christoffels A."/>
            <person name="Clutterbuck D.R."/>
            <person name="Crowe M.L."/>
            <person name="Dalla E."/>
            <person name="Dalrymple B.P."/>
            <person name="de Bono B."/>
            <person name="Della Gatta G."/>
            <person name="di Bernardo D."/>
            <person name="Down T."/>
            <person name="Engstrom P."/>
            <person name="Fagiolini M."/>
            <person name="Faulkner G."/>
            <person name="Fletcher C.F."/>
            <person name="Fukushima T."/>
            <person name="Furuno M."/>
            <person name="Futaki S."/>
            <person name="Gariboldi M."/>
            <person name="Georgii-Hemming P."/>
            <person name="Gingeras T.R."/>
            <person name="Gojobori T."/>
            <person name="Green R.E."/>
            <person name="Gustincich S."/>
            <person name="Harbers M."/>
            <person name="Hayashi Y."/>
            <person name="Hensch T.K."/>
            <person name="Hirokawa N."/>
            <person name="Hill D."/>
            <person name="Huminiecki L."/>
            <person name="Iacono M."/>
            <person name="Ikeo K."/>
            <person name="Iwama A."/>
            <person name="Ishikawa T."/>
            <person name="Jakt M."/>
            <person name="Kanapin A."/>
            <person name="Katoh M."/>
            <person name="Kawasawa Y."/>
            <person name="Kelso J."/>
            <person name="Kitamura H."/>
            <person name="Kitano H."/>
            <person name="Kollias G."/>
            <person name="Krishnan S.P."/>
            <person name="Kruger A."/>
            <person name="Kummerfeld S.K."/>
            <person name="Kurochkin I.V."/>
            <person name="Lareau L.F."/>
            <person name="Lazarevic D."/>
            <person name="Lipovich L."/>
            <person name="Liu J."/>
            <person name="Liuni S."/>
            <person name="McWilliam S."/>
            <person name="Madan Babu M."/>
            <person name="Madera M."/>
            <person name="Marchionni L."/>
            <person name="Matsuda H."/>
            <person name="Matsuzawa S."/>
            <person name="Miki H."/>
            <person name="Mignone F."/>
            <person name="Miyake S."/>
            <person name="Morris K."/>
            <person name="Mottagui-Tabar S."/>
            <person name="Mulder N."/>
            <person name="Nakano N."/>
            <person name="Nakauchi H."/>
            <person name="Ng P."/>
            <person name="Nilsson R."/>
            <person name="Nishiguchi S."/>
            <person name="Nishikawa S."/>
            <person name="Nori F."/>
            <person name="Ohara O."/>
            <person name="Okazaki Y."/>
            <person name="Orlando V."/>
            <person name="Pang K.C."/>
            <person name="Pavan W.J."/>
            <person name="Pavesi G."/>
            <person name="Pesole G."/>
            <person name="Petrovsky N."/>
            <person name="Piazza S."/>
            <person name="Reed J."/>
            <person name="Reid J.F."/>
            <person name="Ring B.Z."/>
            <person name="Ringwald M."/>
            <person name="Rost B."/>
            <person name="Ruan Y."/>
            <person name="Salzberg S.L."/>
            <person name="Sandelin A."/>
            <person name="Schneider C."/>
            <person name="Schoenbach C."/>
            <person name="Sekiguchi K."/>
            <person name="Semple C.A."/>
            <person name="Seno S."/>
            <person name="Sessa L."/>
            <person name="Sheng Y."/>
            <person name="Shibata Y."/>
            <person name="Shimada H."/>
            <person name="Shimada K."/>
            <person name="Silva D."/>
            <person name="Sinclair B."/>
            <person name="Sperling S."/>
            <person name="Stupka E."/>
            <person name="Sugiura K."/>
            <person name="Sultana R."/>
            <person name="Takenaka Y."/>
            <person name="Taki K."/>
            <person name="Tammoja K."/>
            <person name="Tan S.L."/>
            <person name="Tang S."/>
            <person name="Taylor M.S."/>
            <person name="Tegner J."/>
            <person name="Teichmann S.A."/>
            <person name="Ueda H.R."/>
            <person name="van Nimwegen E."/>
            <person name="Verardo R."/>
            <person name="Wei C.L."/>
            <person name="Yagi K."/>
            <person name="Yamanishi H."/>
            <person name="Zabarovsky E."/>
            <person name="Zhu S."/>
            <person name="Zimmer A."/>
            <person name="Hide W."/>
            <person name="Bult C."/>
            <person name="Grimmond S.M."/>
            <person name="Teasdale R.D."/>
            <person name="Liu E.T."/>
            <person name="Brusic V."/>
            <person name="Quackenbush J."/>
            <person name="Wahlestedt C."/>
            <person name="Mattick J.S."/>
            <person name="Hume D.A."/>
            <person name="Kai C."/>
            <person name="Sasaki D."/>
            <person name="Tomaru Y."/>
            <person name="Fukuda S."/>
            <person name="Kanamori-Katayama M."/>
            <person name="Suzuki M."/>
            <person name="Aoki J."/>
            <person name="Arakawa T."/>
            <person name="Iida J."/>
            <person name="Imamura K."/>
            <person name="Itoh M."/>
            <person name="Kato T."/>
            <person name="Kawaji H."/>
            <person name="Kawagashira N."/>
            <person name="Kawashima T."/>
            <person name="Kojima M."/>
            <person name="Kondo S."/>
            <person name="Konno H."/>
            <person name="Nakano K."/>
            <person name="Ninomiya N."/>
            <person name="Nishio T."/>
            <person name="Okada M."/>
            <person name="Plessy C."/>
            <person name="Shibata K."/>
            <person name="Shiraki T."/>
            <person name="Suzuki S."/>
            <person name="Tagami M."/>
            <person name="Waki K."/>
            <person name="Watahiki A."/>
            <person name="Okamura-Oho Y."/>
            <person name="Suzuki H."/>
            <person name="Kawai J."/>
            <person name="Hayashizaki Y."/>
        </authorList>
    </citation>
    <scope>NUCLEOTIDE SEQUENCE [LARGE SCALE MRNA] OF 1-307</scope>
    <source>
        <strain>C57BL/6J</strain>
        <tissue>Adipose tissue</tissue>
    </source>
</reference>
<reference key="4">
    <citation type="journal article" date="2003" name="DNA Res.">
        <title>Prediction of the coding sequences of mouse homologues of KIAA gene: III. The complete nucleotide sequences of 500 mouse KIAA-homologous cDNAs identified by screening of terminal sequences of cDNA clones randomly sampled from size-fractionated libraries.</title>
        <authorList>
            <person name="Okazaki N."/>
            <person name="Kikuno R."/>
            <person name="Ohara R."/>
            <person name="Inamoto S."/>
            <person name="Koseki H."/>
            <person name="Hiraoka S."/>
            <person name="Saga Y."/>
            <person name="Nagase T."/>
            <person name="Ohara O."/>
            <person name="Koga H."/>
        </authorList>
    </citation>
    <scope>NUCLEOTIDE SEQUENCE [LARGE SCALE MRNA] OF 104-922 (ISOFORM 2)</scope>
    <source>
        <tissue>Embryonic tail</tissue>
    </source>
</reference>
<dbReference type="EMBL" id="AL670223">
    <property type="protein sequence ID" value="CAM20139.1"/>
    <property type="molecule type" value="Genomic_DNA"/>
</dbReference>
<dbReference type="EMBL" id="AL627083">
    <property type="protein sequence ID" value="CAM20139.1"/>
    <property type="status" value="JOINED"/>
    <property type="molecule type" value="Genomic_DNA"/>
</dbReference>
<dbReference type="EMBL" id="AL670223">
    <property type="protein sequence ID" value="CAM20140.1"/>
    <property type="status" value="ALT_SEQ"/>
    <property type="molecule type" value="Genomic_DNA"/>
</dbReference>
<dbReference type="EMBL" id="AL627083">
    <property type="protein sequence ID" value="CAM20140.1"/>
    <property type="status" value="JOINED"/>
    <property type="molecule type" value="Genomic_DNA"/>
</dbReference>
<dbReference type="EMBL" id="AL627083">
    <property type="protein sequence ID" value="CAM22542.1"/>
    <property type="molecule type" value="Genomic_DNA"/>
</dbReference>
<dbReference type="EMBL" id="AL670223">
    <property type="protein sequence ID" value="CAM22542.1"/>
    <property type="status" value="JOINED"/>
    <property type="molecule type" value="Genomic_DNA"/>
</dbReference>
<dbReference type="EMBL" id="AL627083">
    <property type="protein sequence ID" value="CAM22543.1"/>
    <property type="status" value="ALT_SEQ"/>
    <property type="molecule type" value="Genomic_DNA"/>
</dbReference>
<dbReference type="EMBL" id="AL670223">
    <property type="protein sequence ID" value="CAM22543.1"/>
    <property type="status" value="JOINED"/>
    <property type="molecule type" value="Genomic_DNA"/>
</dbReference>
<dbReference type="EMBL" id="BC058676">
    <property type="protein sequence ID" value="AAH58676.1"/>
    <property type="molecule type" value="mRNA"/>
</dbReference>
<dbReference type="EMBL" id="BC057356">
    <property type="protein sequence ID" value="AAH57356.1"/>
    <property type="molecule type" value="mRNA"/>
</dbReference>
<dbReference type="EMBL" id="BC080313">
    <property type="protein sequence ID" value="AAH80313.1"/>
    <property type="molecule type" value="mRNA"/>
</dbReference>
<dbReference type="EMBL" id="AK080923">
    <property type="protein sequence ID" value="BAC38080.1"/>
    <property type="molecule type" value="mRNA"/>
</dbReference>
<dbReference type="EMBL" id="AK129397">
    <property type="protein sequence ID" value="BAC98207.1"/>
    <property type="molecule type" value="Transcribed_RNA"/>
</dbReference>
<dbReference type="CCDS" id="CCDS18391.1">
    <molecule id="Q6PDJ1-1"/>
</dbReference>
<dbReference type="RefSeq" id="NP_932154.1">
    <molecule id="Q6PDJ1-1"/>
    <property type="nucleotide sequence ID" value="NM_198037.2"/>
</dbReference>
<dbReference type="PDB" id="8S7C">
    <property type="method" value="X-ray"/>
    <property type="resolution" value="4.70 A"/>
    <property type="chains" value="A/D/G=1-1094"/>
</dbReference>
<dbReference type="PDBsum" id="8S7C"/>
<dbReference type="SMR" id="Q6PDJ1"/>
<dbReference type="BioGRID" id="236077">
    <property type="interactions" value="2"/>
</dbReference>
<dbReference type="FunCoup" id="Q6PDJ1">
    <property type="interactions" value="179"/>
</dbReference>
<dbReference type="STRING" id="10090.ENSMUSP00000030257"/>
<dbReference type="GlyConnect" id="2827">
    <property type="glycosylation" value="1 N-Linked glycan (1 site)"/>
</dbReference>
<dbReference type="GlyCosmos" id="Q6PDJ1">
    <property type="glycosylation" value="2 sites, 1 glycan"/>
</dbReference>
<dbReference type="GlyGen" id="Q6PDJ1">
    <property type="glycosylation" value="5 sites, 5 N-linked glycans (4 sites)"/>
</dbReference>
<dbReference type="iPTMnet" id="Q6PDJ1"/>
<dbReference type="PhosphoSitePlus" id="Q6PDJ1"/>
<dbReference type="PaxDb" id="10090-ENSMUSP00000030257"/>
<dbReference type="PeptideAtlas" id="Q6PDJ1"/>
<dbReference type="ProteomicsDB" id="273900">
    <molecule id="Q6PDJ1-1"/>
</dbReference>
<dbReference type="ProteomicsDB" id="273901">
    <molecule id="Q6PDJ1-2"/>
</dbReference>
<dbReference type="Pumba" id="Q6PDJ1"/>
<dbReference type="Antibodypedia" id="2535">
    <property type="antibodies" value="39 antibodies from 14 providers"/>
</dbReference>
<dbReference type="DNASU" id="320508"/>
<dbReference type="Ensembl" id="ENSMUST00000030257.15">
    <molecule id="Q6PDJ1-1"/>
    <property type="protein sequence ID" value="ENSMUSP00000030257.9"/>
    <property type="gene ID" value="ENSMUSG00000028532.15"/>
</dbReference>
<dbReference type="GeneID" id="320508"/>
<dbReference type="KEGG" id="mmu:320508"/>
<dbReference type="UCSC" id="uc008tvg.1">
    <molecule id="Q6PDJ1-1"/>
    <property type="organism name" value="mouse"/>
</dbReference>
<dbReference type="AGR" id="MGI:2444177"/>
<dbReference type="CTD" id="57685"/>
<dbReference type="MGI" id="MGI:2444177">
    <property type="gene designation" value="Cachd1"/>
</dbReference>
<dbReference type="VEuPathDB" id="HostDB:ENSMUSG00000028532"/>
<dbReference type="eggNOG" id="KOG2353">
    <property type="taxonomic scope" value="Eukaryota"/>
</dbReference>
<dbReference type="GeneTree" id="ENSGT00940000157568"/>
<dbReference type="InParanoid" id="Q6PDJ1"/>
<dbReference type="OMA" id="NTHPYLS"/>
<dbReference type="OrthoDB" id="2150145at2759"/>
<dbReference type="PhylomeDB" id="Q6PDJ1"/>
<dbReference type="TreeFam" id="TF315824"/>
<dbReference type="BioGRID-ORCS" id="320508">
    <property type="hits" value="4 hits in 80 CRISPR screens"/>
</dbReference>
<dbReference type="ChiTaRS" id="Cachd1">
    <property type="organism name" value="mouse"/>
</dbReference>
<dbReference type="PRO" id="PR:Q6PDJ1"/>
<dbReference type="Proteomes" id="UP000000589">
    <property type="component" value="Chromosome 4"/>
</dbReference>
<dbReference type="RNAct" id="Q6PDJ1">
    <property type="molecule type" value="protein"/>
</dbReference>
<dbReference type="Bgee" id="ENSMUSG00000028532">
    <property type="expression patterns" value="Expressed in choroid plexus epithelium and 262 other cell types or tissues"/>
</dbReference>
<dbReference type="ExpressionAtlas" id="Q6PDJ1">
    <property type="expression patterns" value="baseline and differential"/>
</dbReference>
<dbReference type="GO" id="GO:0016020">
    <property type="term" value="C:membrane"/>
    <property type="evidence" value="ECO:0007669"/>
    <property type="project" value="UniProtKB-SubCell"/>
</dbReference>
<dbReference type="GO" id="GO:0006816">
    <property type="term" value="P:calcium ion transport"/>
    <property type="evidence" value="ECO:0007669"/>
    <property type="project" value="UniProtKB-KW"/>
</dbReference>
<dbReference type="FunFam" id="3.30.450.20:FF:000024">
    <property type="entry name" value="VWFA and cache domain-containing protein 1"/>
    <property type="match status" value="1"/>
</dbReference>
<dbReference type="FunFam" id="3.30.450.20:FF:000029">
    <property type="entry name" value="VWFA and cache domain-containing protein 1"/>
    <property type="match status" value="1"/>
</dbReference>
<dbReference type="FunFam" id="3.40.50.410:FF:000039">
    <property type="entry name" value="VWFA and cache domain-containing protein 1"/>
    <property type="match status" value="1"/>
</dbReference>
<dbReference type="Gene3D" id="3.30.450.20">
    <property type="entry name" value="PAS domain"/>
    <property type="match status" value="2"/>
</dbReference>
<dbReference type="Gene3D" id="3.40.50.410">
    <property type="entry name" value="von Willebrand factor, type A domain"/>
    <property type="match status" value="1"/>
</dbReference>
<dbReference type="InterPro" id="IPR051173">
    <property type="entry name" value="Ca_channel_alpha-2/delta"/>
</dbReference>
<dbReference type="InterPro" id="IPR029151">
    <property type="entry name" value="Sensor-like_sf"/>
</dbReference>
<dbReference type="InterPro" id="IPR002035">
    <property type="entry name" value="VWF_A"/>
</dbReference>
<dbReference type="InterPro" id="IPR036465">
    <property type="entry name" value="vWFA_dom_sf"/>
</dbReference>
<dbReference type="PANTHER" id="PTHR10166">
    <property type="entry name" value="VOLTAGE-DEPENDENT CALCIUM CHANNEL SUBUNIT ALPHA-2/DELTA-RELATED"/>
    <property type="match status" value="1"/>
</dbReference>
<dbReference type="PANTHER" id="PTHR10166:SF68">
    <property type="entry name" value="VWFA AND CACHE DOMAIN-CONTAINING PROTEIN 1"/>
    <property type="match status" value="1"/>
</dbReference>
<dbReference type="SUPFAM" id="SSF103190">
    <property type="entry name" value="Sensory domain-like"/>
    <property type="match status" value="1"/>
</dbReference>
<dbReference type="SUPFAM" id="SSF53300">
    <property type="entry name" value="vWA-like"/>
    <property type="match status" value="1"/>
</dbReference>
<dbReference type="PROSITE" id="PS50234">
    <property type="entry name" value="VWFA"/>
    <property type="match status" value="1"/>
</dbReference>
<keyword id="KW-0002">3D-structure</keyword>
<keyword id="KW-0025">Alternative splicing</keyword>
<keyword id="KW-0106">Calcium</keyword>
<keyword id="KW-0109">Calcium transport</keyword>
<keyword id="KW-0325">Glycoprotein</keyword>
<keyword id="KW-0406">Ion transport</keyword>
<keyword id="KW-0472">Membrane</keyword>
<keyword id="KW-1185">Reference proteome</keyword>
<keyword id="KW-0677">Repeat</keyword>
<keyword id="KW-0732">Signal</keyword>
<keyword id="KW-0812">Transmembrane</keyword>
<keyword id="KW-1133">Transmembrane helix</keyword>
<keyword id="KW-0813">Transport</keyword>